<name>RECA_CUTAC</name>
<accession>P0CZ02</accession>
<accession>Q6A902</accession>
<evidence type="ECO:0000255" key="1">
    <source>
        <dbReference type="HAMAP-Rule" id="MF_00268"/>
    </source>
</evidence>
<comment type="function">
    <text evidence="1">Can catalyze the hydrolysis of ATP in the presence of single-stranded DNA, the ATP-dependent uptake of single-stranded DNA by duplex DNA, and the ATP-dependent hybridization of homologous single-stranded DNAs. It interacts with LexA causing its activation and leading to its autocatalytic cleavage.</text>
</comment>
<comment type="subcellular location">
    <subcellularLocation>
        <location evidence="1">Cytoplasm</location>
    </subcellularLocation>
</comment>
<comment type="similarity">
    <text evidence="1">Belongs to the RecA family.</text>
</comment>
<protein>
    <recommendedName>
        <fullName evidence="1">Protein RecA</fullName>
    </recommendedName>
    <alternativeName>
        <fullName evidence="1">Recombinase A</fullName>
    </alternativeName>
</protein>
<gene>
    <name evidence="1" type="primary">recA</name>
</gene>
<keyword id="KW-0067">ATP-binding</keyword>
<keyword id="KW-0963">Cytoplasm</keyword>
<keyword id="KW-0227">DNA damage</keyword>
<keyword id="KW-0233">DNA recombination</keyword>
<keyword id="KW-0234">DNA repair</keyword>
<keyword id="KW-0238">DNA-binding</keyword>
<keyword id="KW-0547">Nucleotide-binding</keyword>
<keyword id="KW-0742">SOS response</keyword>
<proteinExistence type="inferred from homology"/>
<organism>
    <name type="scientific">Cutibacterium acnes</name>
    <name type="common">Propionibacterium acnes</name>
    <dbReference type="NCBI Taxonomy" id="1747"/>
    <lineage>
        <taxon>Bacteria</taxon>
        <taxon>Bacillati</taxon>
        <taxon>Actinomycetota</taxon>
        <taxon>Actinomycetes</taxon>
        <taxon>Propionibacteriales</taxon>
        <taxon>Propionibacteriaceae</taxon>
        <taxon>Cutibacterium</taxon>
    </lineage>
</organism>
<sequence length="348" mass="37153">MAATADREKALATALQQIEKQHGKGSIMRLGEQETVKIAAIPTGSVALDVALGVGGLPRGRIVEIYGPESSGKTTVALHAIANAQAEGGICAFIDAEHALDPEYARKLGVDTDSLLVSQPDNGEQALEIADTLVRSGALELIVVDSVAALTPKAEIEGEMGDSHVGLQARLMSQALRKMTGALNAAGTTAIFINQLREKIGVMFGSPETTTGGRALKFYSSVRLDVRRVETLKDGSEMVGNRTRVKVAKNKVAPPFKQAEFDILYGQGISREGSLIDMGVDCGIITKSGSWFSYNNEQLGQGKENVRKFLRGNPDVANEIEDKILTHLGLREAEVPEGVDPRTGEVEF</sequence>
<feature type="chain" id="PRO_0000410487" description="Protein RecA">
    <location>
        <begin position="1"/>
        <end position="348"/>
    </location>
</feature>
<feature type="binding site" evidence="1">
    <location>
        <begin position="67"/>
        <end position="74"/>
    </location>
    <ligand>
        <name>ATP</name>
        <dbReference type="ChEBI" id="CHEBI:30616"/>
    </ligand>
</feature>
<reference key="1">
    <citation type="journal article" date="2005" name="J. Clin. Microbiol.">
        <title>Propionibacterium acnes types I and II represent phylogenetically distinct groups.</title>
        <authorList>
            <person name="McDowell A."/>
            <person name="Valanne S."/>
            <person name="Ramage G."/>
            <person name="Tunney M.M."/>
            <person name="Glenn J.V."/>
            <person name="McLorinan G.C."/>
            <person name="Bhatia A."/>
            <person name="Maisonneuve J.F."/>
            <person name="Lodes M."/>
            <person name="Persing D.H."/>
            <person name="Patrick S."/>
        </authorList>
    </citation>
    <scope>NUCLEOTIDE SEQUENCE [GENOMIC DNA]</scope>
    <source>
        <strain>AT1</strain>
        <strain>CK17</strain>
        <strain>JMK9</strain>
        <strain>JR2</strain>
        <strain>L1958</strain>
        <strain>LED2</strain>
        <strain>MMG9</strain>
        <strain>NCTC 737</strain>
        <strain>P135</strain>
        <strain>P136</strain>
        <strain>P6</strain>
        <strain>P9</strain>
        <strain>PV37</strain>
        <strain>PV58</strain>
        <strain>PV93</strain>
        <strain>RM1</strain>
        <strain>RM9</strain>
        <strain>TON9</strain>
        <strain>W1034</strain>
        <strain>W1392</strain>
        <strain>W1973</strain>
        <strain>W1998</strain>
        <strain>W513</strain>
        <strain>W633</strain>
        <strain>W891</strain>
        <strain>WMK9</strain>
    </source>
</reference>
<dbReference type="EMBL" id="AY642055">
    <property type="protein sequence ID" value="AAT69987.1"/>
    <property type="molecule type" value="Genomic_DNA"/>
</dbReference>
<dbReference type="EMBL" id="AY642056">
    <property type="protein sequence ID" value="AAT69988.1"/>
    <property type="molecule type" value="Genomic_DNA"/>
</dbReference>
<dbReference type="EMBL" id="AY642059">
    <property type="protein sequence ID" value="AAT69991.1"/>
    <property type="molecule type" value="Genomic_DNA"/>
</dbReference>
<dbReference type="EMBL" id="AY642060">
    <property type="protein sequence ID" value="AAT69992.1"/>
    <property type="molecule type" value="Genomic_DNA"/>
</dbReference>
<dbReference type="EMBL" id="AY642063">
    <property type="protein sequence ID" value="AAT69995.1"/>
    <property type="molecule type" value="Genomic_DNA"/>
</dbReference>
<dbReference type="EMBL" id="AY642068">
    <property type="protein sequence ID" value="AAT70000.1"/>
    <property type="molecule type" value="Genomic_DNA"/>
</dbReference>
<dbReference type="EMBL" id="AY642070">
    <property type="protein sequence ID" value="AAT70002.1"/>
    <property type="molecule type" value="Genomic_DNA"/>
</dbReference>
<dbReference type="EMBL" id="AY642071">
    <property type="protein sequence ID" value="AAT70003.1"/>
    <property type="molecule type" value="Genomic_DNA"/>
</dbReference>
<dbReference type="EMBL" id="AY642072">
    <property type="protein sequence ID" value="AAT70004.1"/>
    <property type="molecule type" value="Genomic_DNA"/>
</dbReference>
<dbReference type="EMBL" id="AY642073">
    <property type="protein sequence ID" value="AAT70005.1"/>
    <property type="molecule type" value="Genomic_DNA"/>
</dbReference>
<dbReference type="EMBL" id="AY642074">
    <property type="protein sequence ID" value="AAT70006.1"/>
    <property type="molecule type" value="Genomic_DNA"/>
</dbReference>
<dbReference type="EMBL" id="AY642075">
    <property type="protein sequence ID" value="AAT70007.1"/>
    <property type="molecule type" value="Genomic_DNA"/>
</dbReference>
<dbReference type="EMBL" id="AY642076">
    <property type="protein sequence ID" value="AAT70008.1"/>
    <property type="molecule type" value="Genomic_DNA"/>
</dbReference>
<dbReference type="EMBL" id="AY642077">
    <property type="protein sequence ID" value="AAT70009.1"/>
    <property type="molecule type" value="Genomic_DNA"/>
</dbReference>
<dbReference type="EMBL" id="AY642078">
    <property type="protein sequence ID" value="AAT70010.1"/>
    <property type="molecule type" value="Genomic_DNA"/>
</dbReference>
<dbReference type="EMBL" id="AY642079">
    <property type="protein sequence ID" value="AAT70011.1"/>
    <property type="molecule type" value="Genomic_DNA"/>
</dbReference>
<dbReference type="EMBL" id="AY642080">
    <property type="protein sequence ID" value="AAT70012.1"/>
    <property type="molecule type" value="Genomic_DNA"/>
</dbReference>
<dbReference type="EMBL" id="AY642081">
    <property type="protein sequence ID" value="AAT70013.1"/>
    <property type="molecule type" value="Genomic_DNA"/>
</dbReference>
<dbReference type="EMBL" id="AY642082">
    <property type="protein sequence ID" value="AAT70014.1"/>
    <property type="molecule type" value="Genomic_DNA"/>
</dbReference>
<dbReference type="EMBL" id="AY642086">
    <property type="protein sequence ID" value="AAT70018.1"/>
    <property type="molecule type" value="Genomic_DNA"/>
</dbReference>
<dbReference type="EMBL" id="AY642092">
    <property type="protein sequence ID" value="AAT70024.1"/>
    <property type="molecule type" value="Genomic_DNA"/>
</dbReference>
<dbReference type="EMBL" id="AY642093">
    <property type="protein sequence ID" value="AAT70025.1"/>
    <property type="molecule type" value="Genomic_DNA"/>
</dbReference>
<dbReference type="EMBL" id="AY642094">
    <property type="protein sequence ID" value="AAT70026.1"/>
    <property type="molecule type" value="Genomic_DNA"/>
</dbReference>
<dbReference type="EMBL" id="AY642095">
    <property type="protein sequence ID" value="AAT70027.1"/>
    <property type="molecule type" value="Genomic_DNA"/>
</dbReference>
<dbReference type="EMBL" id="AY642096">
    <property type="protein sequence ID" value="AAT70028.1"/>
    <property type="molecule type" value="Genomic_DNA"/>
</dbReference>
<dbReference type="EMBL" id="AY642097">
    <property type="protein sequence ID" value="AAT70029.1"/>
    <property type="molecule type" value="Genomic_DNA"/>
</dbReference>
<dbReference type="RefSeq" id="WP_002515492.1">
    <property type="nucleotide sequence ID" value="NZ_WQNV01000010.1"/>
</dbReference>
<dbReference type="SMR" id="P0CZ02"/>
<dbReference type="GeneID" id="92856980"/>
<dbReference type="OMA" id="DSKMGLH"/>
<dbReference type="OrthoDB" id="9776733at2"/>
<dbReference type="GO" id="GO:0005829">
    <property type="term" value="C:cytosol"/>
    <property type="evidence" value="ECO:0007669"/>
    <property type="project" value="TreeGrafter"/>
</dbReference>
<dbReference type="GO" id="GO:0005524">
    <property type="term" value="F:ATP binding"/>
    <property type="evidence" value="ECO:0007669"/>
    <property type="project" value="UniProtKB-UniRule"/>
</dbReference>
<dbReference type="GO" id="GO:0016887">
    <property type="term" value="F:ATP hydrolysis activity"/>
    <property type="evidence" value="ECO:0007669"/>
    <property type="project" value="InterPro"/>
</dbReference>
<dbReference type="GO" id="GO:0140664">
    <property type="term" value="F:ATP-dependent DNA damage sensor activity"/>
    <property type="evidence" value="ECO:0007669"/>
    <property type="project" value="InterPro"/>
</dbReference>
<dbReference type="GO" id="GO:0003684">
    <property type="term" value="F:damaged DNA binding"/>
    <property type="evidence" value="ECO:0007669"/>
    <property type="project" value="UniProtKB-UniRule"/>
</dbReference>
<dbReference type="GO" id="GO:0003697">
    <property type="term" value="F:single-stranded DNA binding"/>
    <property type="evidence" value="ECO:0007669"/>
    <property type="project" value="UniProtKB-UniRule"/>
</dbReference>
<dbReference type="GO" id="GO:0006310">
    <property type="term" value="P:DNA recombination"/>
    <property type="evidence" value="ECO:0007669"/>
    <property type="project" value="UniProtKB-UniRule"/>
</dbReference>
<dbReference type="GO" id="GO:0006281">
    <property type="term" value="P:DNA repair"/>
    <property type="evidence" value="ECO:0007669"/>
    <property type="project" value="UniProtKB-UniRule"/>
</dbReference>
<dbReference type="GO" id="GO:0009432">
    <property type="term" value="P:SOS response"/>
    <property type="evidence" value="ECO:0007669"/>
    <property type="project" value="UniProtKB-UniRule"/>
</dbReference>
<dbReference type="CDD" id="cd00983">
    <property type="entry name" value="RecA"/>
    <property type="match status" value="1"/>
</dbReference>
<dbReference type="FunFam" id="3.40.50.300:FF:000087">
    <property type="entry name" value="Recombinase RecA"/>
    <property type="match status" value="1"/>
</dbReference>
<dbReference type="Gene3D" id="3.40.50.300">
    <property type="entry name" value="P-loop containing nucleotide triphosphate hydrolases"/>
    <property type="match status" value="1"/>
</dbReference>
<dbReference type="HAMAP" id="MF_00268">
    <property type="entry name" value="RecA"/>
    <property type="match status" value="1"/>
</dbReference>
<dbReference type="InterPro" id="IPR003593">
    <property type="entry name" value="AAA+_ATPase"/>
</dbReference>
<dbReference type="InterPro" id="IPR013765">
    <property type="entry name" value="DNA_recomb/repair_RecA"/>
</dbReference>
<dbReference type="InterPro" id="IPR020584">
    <property type="entry name" value="DNA_recomb/repair_RecA_CS"/>
</dbReference>
<dbReference type="InterPro" id="IPR027417">
    <property type="entry name" value="P-loop_NTPase"/>
</dbReference>
<dbReference type="InterPro" id="IPR049261">
    <property type="entry name" value="RecA-like_C"/>
</dbReference>
<dbReference type="InterPro" id="IPR049428">
    <property type="entry name" value="RecA-like_N"/>
</dbReference>
<dbReference type="InterPro" id="IPR020588">
    <property type="entry name" value="RecA_ATP-bd"/>
</dbReference>
<dbReference type="InterPro" id="IPR023400">
    <property type="entry name" value="RecA_C_sf"/>
</dbReference>
<dbReference type="InterPro" id="IPR020587">
    <property type="entry name" value="RecA_monomer-monomer_interface"/>
</dbReference>
<dbReference type="NCBIfam" id="TIGR02012">
    <property type="entry name" value="tigrfam_recA"/>
    <property type="match status" value="1"/>
</dbReference>
<dbReference type="PANTHER" id="PTHR45900:SF1">
    <property type="entry name" value="MITOCHONDRIAL DNA REPAIR PROTEIN RECA HOMOLOG-RELATED"/>
    <property type="match status" value="1"/>
</dbReference>
<dbReference type="PANTHER" id="PTHR45900">
    <property type="entry name" value="RECA"/>
    <property type="match status" value="1"/>
</dbReference>
<dbReference type="Pfam" id="PF00154">
    <property type="entry name" value="RecA"/>
    <property type="match status" value="1"/>
</dbReference>
<dbReference type="Pfam" id="PF21096">
    <property type="entry name" value="RecA_C"/>
    <property type="match status" value="1"/>
</dbReference>
<dbReference type="PRINTS" id="PR00142">
    <property type="entry name" value="RECA"/>
</dbReference>
<dbReference type="SMART" id="SM00382">
    <property type="entry name" value="AAA"/>
    <property type="match status" value="1"/>
</dbReference>
<dbReference type="SUPFAM" id="SSF52540">
    <property type="entry name" value="P-loop containing nucleoside triphosphate hydrolases"/>
    <property type="match status" value="1"/>
</dbReference>
<dbReference type="SUPFAM" id="SSF54752">
    <property type="entry name" value="RecA protein, C-terminal domain"/>
    <property type="match status" value="1"/>
</dbReference>
<dbReference type="PROSITE" id="PS00321">
    <property type="entry name" value="RECA_1"/>
    <property type="match status" value="1"/>
</dbReference>
<dbReference type="PROSITE" id="PS50162">
    <property type="entry name" value="RECA_2"/>
    <property type="match status" value="1"/>
</dbReference>
<dbReference type="PROSITE" id="PS50163">
    <property type="entry name" value="RECA_3"/>
    <property type="match status" value="1"/>
</dbReference>